<sequence>MQIIEGKLQLQGNEKIAILTSRFNHIITDRLKEGAMDCFKRHGGDEELLDLVLVPGAYELPLILDKLLESGKYDGVCVLGAIIRGGTPHFDYVSAEATKGIASAMLKYSMPVSFGVLTTDNIEQAIERAGSKAGNKGFEAMSTLIELLSLCQTLKD</sequence>
<protein>
    <recommendedName>
        <fullName evidence="1">6,7-dimethyl-8-ribityllumazine synthase</fullName>
        <shortName evidence="1">DMRL synthase</shortName>
        <shortName evidence="1">LS</shortName>
        <shortName evidence="1">Lumazine synthase</shortName>
        <ecNumber evidence="1">2.5.1.78</ecNumber>
    </recommendedName>
</protein>
<comment type="function">
    <text evidence="1">Catalyzes the formation of 6,7-dimethyl-8-ribityllumazine by condensation of 5-amino-6-(D-ribitylamino)uracil with 3,4-dihydroxy-2-butanone 4-phosphate. This is the penultimate step in the biosynthesis of riboflavin.</text>
</comment>
<comment type="catalytic activity">
    <reaction evidence="1">
        <text>(2S)-2-hydroxy-3-oxobutyl phosphate + 5-amino-6-(D-ribitylamino)uracil = 6,7-dimethyl-8-(1-D-ribityl)lumazine + phosphate + 2 H2O + H(+)</text>
        <dbReference type="Rhea" id="RHEA:26152"/>
        <dbReference type="ChEBI" id="CHEBI:15377"/>
        <dbReference type="ChEBI" id="CHEBI:15378"/>
        <dbReference type="ChEBI" id="CHEBI:15934"/>
        <dbReference type="ChEBI" id="CHEBI:43474"/>
        <dbReference type="ChEBI" id="CHEBI:58201"/>
        <dbReference type="ChEBI" id="CHEBI:58830"/>
        <dbReference type="EC" id="2.5.1.78"/>
    </reaction>
</comment>
<comment type="pathway">
    <text evidence="1">Cofactor biosynthesis; riboflavin biosynthesis; riboflavin from 2-hydroxy-3-oxobutyl phosphate and 5-amino-6-(D-ribitylamino)uracil: step 1/2.</text>
</comment>
<comment type="similarity">
    <text evidence="1">Belongs to the DMRL synthase family.</text>
</comment>
<accession>Q9ZN56</accession>
<organism>
    <name type="scientific">Helicobacter pylori (strain J99 / ATCC 700824)</name>
    <name type="common">Campylobacter pylori J99</name>
    <dbReference type="NCBI Taxonomy" id="85963"/>
    <lineage>
        <taxon>Bacteria</taxon>
        <taxon>Pseudomonadati</taxon>
        <taxon>Campylobacterota</taxon>
        <taxon>Epsilonproteobacteria</taxon>
        <taxon>Campylobacterales</taxon>
        <taxon>Helicobacteraceae</taxon>
        <taxon>Helicobacter</taxon>
    </lineage>
</organism>
<name>RISB_HELPJ</name>
<proteinExistence type="inferred from homology"/>
<keyword id="KW-0686">Riboflavin biosynthesis</keyword>
<keyword id="KW-0808">Transferase</keyword>
<reference key="1">
    <citation type="journal article" date="1999" name="Nature">
        <title>Genomic sequence comparison of two unrelated isolates of the human gastric pathogen Helicobacter pylori.</title>
        <authorList>
            <person name="Alm R.A."/>
            <person name="Ling L.-S.L."/>
            <person name="Moir D.T."/>
            <person name="King B.L."/>
            <person name="Brown E.D."/>
            <person name="Doig P.C."/>
            <person name="Smith D.R."/>
            <person name="Noonan B."/>
            <person name="Guild B.C."/>
            <person name="deJonge B.L."/>
            <person name="Carmel G."/>
            <person name="Tummino P.J."/>
            <person name="Caruso A."/>
            <person name="Uria-Nickelsen M."/>
            <person name="Mills D.M."/>
            <person name="Ives C."/>
            <person name="Gibson R."/>
            <person name="Merberg D."/>
            <person name="Mills S.D."/>
            <person name="Jiang Q."/>
            <person name="Taylor D.E."/>
            <person name="Vovis G.F."/>
            <person name="Trust T.J."/>
        </authorList>
    </citation>
    <scope>NUCLEOTIDE SEQUENCE [LARGE SCALE GENOMIC DNA]</scope>
    <source>
        <strain>J99 / ATCC 700824</strain>
    </source>
</reference>
<dbReference type="EC" id="2.5.1.78" evidence="1"/>
<dbReference type="EMBL" id="AE001439">
    <property type="protein sequence ID" value="AAD05586.1"/>
    <property type="molecule type" value="Genomic_DNA"/>
</dbReference>
<dbReference type="PIR" id="D71985">
    <property type="entry name" value="D71985"/>
</dbReference>
<dbReference type="RefSeq" id="WP_001165597.1">
    <property type="nucleotide sequence ID" value="NC_000921.1"/>
</dbReference>
<dbReference type="SMR" id="Q9ZN56"/>
<dbReference type="KEGG" id="hpj:jhp_0002"/>
<dbReference type="PATRIC" id="fig|85963.30.peg.1043"/>
<dbReference type="eggNOG" id="COG0054">
    <property type="taxonomic scope" value="Bacteria"/>
</dbReference>
<dbReference type="BRENDA" id="2.5.1.78">
    <property type="organism ID" value="11068"/>
</dbReference>
<dbReference type="UniPathway" id="UPA00275">
    <property type="reaction ID" value="UER00404"/>
</dbReference>
<dbReference type="Proteomes" id="UP000000804">
    <property type="component" value="Chromosome"/>
</dbReference>
<dbReference type="GO" id="GO:0005829">
    <property type="term" value="C:cytosol"/>
    <property type="evidence" value="ECO:0007669"/>
    <property type="project" value="TreeGrafter"/>
</dbReference>
<dbReference type="GO" id="GO:0009349">
    <property type="term" value="C:riboflavin synthase complex"/>
    <property type="evidence" value="ECO:0007669"/>
    <property type="project" value="InterPro"/>
</dbReference>
<dbReference type="GO" id="GO:0000906">
    <property type="term" value="F:6,7-dimethyl-8-ribityllumazine synthase activity"/>
    <property type="evidence" value="ECO:0007669"/>
    <property type="project" value="UniProtKB-UniRule"/>
</dbReference>
<dbReference type="GO" id="GO:0009231">
    <property type="term" value="P:riboflavin biosynthetic process"/>
    <property type="evidence" value="ECO:0007669"/>
    <property type="project" value="UniProtKB-UniRule"/>
</dbReference>
<dbReference type="CDD" id="cd09209">
    <property type="entry name" value="Lumazine_synthase-I"/>
    <property type="match status" value="1"/>
</dbReference>
<dbReference type="FunFam" id="3.40.50.960:FF:000001">
    <property type="entry name" value="6,7-dimethyl-8-ribityllumazine synthase"/>
    <property type="match status" value="1"/>
</dbReference>
<dbReference type="Gene3D" id="3.40.50.960">
    <property type="entry name" value="Lumazine/riboflavin synthase"/>
    <property type="match status" value="1"/>
</dbReference>
<dbReference type="HAMAP" id="MF_00178">
    <property type="entry name" value="Lumazine_synth"/>
    <property type="match status" value="1"/>
</dbReference>
<dbReference type="InterPro" id="IPR034964">
    <property type="entry name" value="LS"/>
</dbReference>
<dbReference type="InterPro" id="IPR002180">
    <property type="entry name" value="LS/RS"/>
</dbReference>
<dbReference type="InterPro" id="IPR036467">
    <property type="entry name" value="LS/RS_sf"/>
</dbReference>
<dbReference type="NCBIfam" id="TIGR00114">
    <property type="entry name" value="lumazine-synth"/>
    <property type="match status" value="1"/>
</dbReference>
<dbReference type="PANTHER" id="PTHR21058:SF0">
    <property type="entry name" value="6,7-DIMETHYL-8-RIBITYLLUMAZINE SYNTHASE"/>
    <property type="match status" value="1"/>
</dbReference>
<dbReference type="PANTHER" id="PTHR21058">
    <property type="entry name" value="6,7-DIMETHYL-8-RIBITYLLUMAZINE SYNTHASE DMRL SYNTHASE LUMAZINE SYNTHASE"/>
    <property type="match status" value="1"/>
</dbReference>
<dbReference type="Pfam" id="PF00885">
    <property type="entry name" value="DMRL_synthase"/>
    <property type="match status" value="1"/>
</dbReference>
<dbReference type="SUPFAM" id="SSF52121">
    <property type="entry name" value="Lumazine synthase"/>
    <property type="match status" value="1"/>
</dbReference>
<feature type="chain" id="PRO_0000134764" description="6,7-dimethyl-8-ribityllumazine synthase">
    <location>
        <begin position="1"/>
        <end position="156"/>
    </location>
</feature>
<feature type="active site" description="Proton donor" evidence="1">
    <location>
        <position position="89"/>
    </location>
</feature>
<feature type="binding site" evidence="1">
    <location>
        <position position="23"/>
    </location>
    <ligand>
        <name>5-amino-6-(D-ribitylamino)uracil</name>
        <dbReference type="ChEBI" id="CHEBI:15934"/>
    </ligand>
</feature>
<feature type="binding site" evidence="1">
    <location>
        <begin position="57"/>
        <end position="59"/>
    </location>
    <ligand>
        <name>5-amino-6-(D-ribitylamino)uracil</name>
        <dbReference type="ChEBI" id="CHEBI:15934"/>
    </ligand>
</feature>
<feature type="binding site" evidence="1">
    <location>
        <begin position="81"/>
        <end position="83"/>
    </location>
    <ligand>
        <name>5-amino-6-(D-ribitylamino)uracil</name>
        <dbReference type="ChEBI" id="CHEBI:15934"/>
    </ligand>
</feature>
<feature type="binding site" evidence="1">
    <location>
        <begin position="86"/>
        <end position="87"/>
    </location>
    <ligand>
        <name>(2S)-2-hydroxy-3-oxobutyl phosphate</name>
        <dbReference type="ChEBI" id="CHEBI:58830"/>
    </ligand>
</feature>
<feature type="binding site" evidence="1">
    <location>
        <position position="114"/>
    </location>
    <ligand>
        <name>5-amino-6-(D-ribitylamino)uracil</name>
        <dbReference type="ChEBI" id="CHEBI:15934"/>
    </ligand>
</feature>
<feature type="binding site" evidence="1">
    <location>
        <position position="128"/>
    </location>
    <ligand>
        <name>(2S)-2-hydroxy-3-oxobutyl phosphate</name>
        <dbReference type="ChEBI" id="CHEBI:58830"/>
    </ligand>
</feature>
<gene>
    <name evidence="1" type="primary">ribH</name>
    <name type="synonym">ribE</name>
    <name type="ordered locus">jhp_0002</name>
</gene>
<evidence type="ECO:0000255" key="1">
    <source>
        <dbReference type="HAMAP-Rule" id="MF_00178"/>
    </source>
</evidence>